<name>ILVC_TRIV2</name>
<protein>
    <recommendedName>
        <fullName evidence="1">Ketol-acid reductoisomerase (NADP(+))</fullName>
        <shortName evidence="1">KARI</shortName>
        <ecNumber evidence="1">1.1.1.86</ecNumber>
    </recommendedName>
    <alternativeName>
        <fullName evidence="1">Acetohydroxy-acid isomeroreductase</fullName>
        <shortName evidence="1">AHIR</shortName>
    </alternativeName>
    <alternativeName>
        <fullName evidence="1">Alpha-keto-beta-hydroxylacyl reductoisomerase</fullName>
    </alternativeName>
    <alternativeName>
        <fullName evidence="1">Ketol-acid reductoisomerase type 1</fullName>
    </alternativeName>
    <alternativeName>
        <fullName evidence="1">Ketol-acid reductoisomerase type I</fullName>
    </alternativeName>
</protein>
<comment type="function">
    <text evidence="1">Involved in the biosynthesis of branched-chain amino acids (BCAA). Catalyzes an alkyl-migration followed by a ketol-acid reduction of (S)-2-acetolactate (S2AL) to yield (R)-2,3-dihydroxy-isovalerate. In the isomerase reaction, S2AL is rearranged via a Mg-dependent methyl migration to produce 3-hydroxy-3-methyl-2-ketobutyrate (HMKB). In the reductase reaction, this 2-ketoacid undergoes a metal-dependent reduction by NADPH to yield (R)-2,3-dihydroxy-isovalerate.</text>
</comment>
<comment type="catalytic activity">
    <reaction evidence="1">
        <text>(2R)-2,3-dihydroxy-3-methylbutanoate + NADP(+) = (2S)-2-acetolactate + NADPH + H(+)</text>
        <dbReference type="Rhea" id="RHEA:22068"/>
        <dbReference type="ChEBI" id="CHEBI:15378"/>
        <dbReference type="ChEBI" id="CHEBI:49072"/>
        <dbReference type="ChEBI" id="CHEBI:57783"/>
        <dbReference type="ChEBI" id="CHEBI:58349"/>
        <dbReference type="ChEBI" id="CHEBI:58476"/>
        <dbReference type="EC" id="1.1.1.86"/>
    </reaction>
</comment>
<comment type="catalytic activity">
    <reaction evidence="1">
        <text>(2R,3R)-2,3-dihydroxy-3-methylpentanoate + NADP(+) = (S)-2-ethyl-2-hydroxy-3-oxobutanoate + NADPH + H(+)</text>
        <dbReference type="Rhea" id="RHEA:13493"/>
        <dbReference type="ChEBI" id="CHEBI:15378"/>
        <dbReference type="ChEBI" id="CHEBI:49256"/>
        <dbReference type="ChEBI" id="CHEBI:49258"/>
        <dbReference type="ChEBI" id="CHEBI:57783"/>
        <dbReference type="ChEBI" id="CHEBI:58349"/>
        <dbReference type="EC" id="1.1.1.86"/>
    </reaction>
</comment>
<comment type="cofactor">
    <cofactor evidence="1">
        <name>Mg(2+)</name>
        <dbReference type="ChEBI" id="CHEBI:18420"/>
    </cofactor>
    <text evidence="1">Binds 2 magnesium ions per subunit.</text>
</comment>
<comment type="pathway">
    <text evidence="1">Amino-acid biosynthesis; L-isoleucine biosynthesis; L-isoleucine from 2-oxobutanoate: step 2/4.</text>
</comment>
<comment type="pathway">
    <text evidence="1">Amino-acid biosynthesis; L-valine biosynthesis; L-valine from pyruvate: step 2/4.</text>
</comment>
<comment type="similarity">
    <text evidence="1">Belongs to the ketol-acid reductoisomerase family.</text>
</comment>
<organism>
    <name type="scientific">Trichormus variabilis (strain ATCC 29413 / PCC 7937)</name>
    <name type="common">Anabaena variabilis</name>
    <dbReference type="NCBI Taxonomy" id="240292"/>
    <lineage>
        <taxon>Bacteria</taxon>
        <taxon>Bacillati</taxon>
        <taxon>Cyanobacteriota</taxon>
        <taxon>Cyanophyceae</taxon>
        <taxon>Nostocales</taxon>
        <taxon>Nostocaceae</taxon>
        <taxon>Trichormus</taxon>
    </lineage>
</organism>
<proteinExistence type="inferred from homology"/>
<evidence type="ECO:0000255" key="1">
    <source>
        <dbReference type="HAMAP-Rule" id="MF_00435"/>
    </source>
</evidence>
<evidence type="ECO:0000255" key="2">
    <source>
        <dbReference type="PROSITE-ProRule" id="PRU01197"/>
    </source>
</evidence>
<evidence type="ECO:0000255" key="3">
    <source>
        <dbReference type="PROSITE-ProRule" id="PRU01198"/>
    </source>
</evidence>
<sequence length="331" mass="35997">MARMYYDEDANLDLLAGKTIAIIGYGSQGHAHALNLKDSGLNVIVGLYPGSKSAEKAQAAGLTVKNVADAANVADFIMILLPDEVQKTVYKNEIEPNLQEGNTLAFAHGFNIHFGQVVPPANVDVVMVAPKGPGHLVRRTYEQGQGVPALFAVYQDASGKARDRALSYAKGIGGTRGGVLETTFREETETDLFGEQAVLCGGLSALIKAGFETLVEAGYQPELAYFECLHEVKLIVDLVVEGGLAKMRDSISNTAEYGDYTRGPRIVNEQTKAEMRKVLSEIQSGQFAREFVLENQSGKPGFTAMRRQEAEHPIEEVGKDLRAMFSWLKKV</sequence>
<feature type="chain" id="PRO_0000252749" description="Ketol-acid reductoisomerase (NADP(+))">
    <location>
        <begin position="1"/>
        <end position="331"/>
    </location>
</feature>
<feature type="domain" description="KARI N-terminal Rossmann" evidence="2">
    <location>
        <begin position="2"/>
        <end position="182"/>
    </location>
</feature>
<feature type="domain" description="KARI C-terminal knotted" evidence="3">
    <location>
        <begin position="183"/>
        <end position="328"/>
    </location>
</feature>
<feature type="active site" evidence="1">
    <location>
        <position position="108"/>
    </location>
</feature>
<feature type="binding site" evidence="1">
    <location>
        <begin position="25"/>
        <end position="28"/>
    </location>
    <ligand>
        <name>NADP(+)</name>
        <dbReference type="ChEBI" id="CHEBI:58349"/>
    </ligand>
</feature>
<feature type="binding site" evidence="1">
    <location>
        <position position="51"/>
    </location>
    <ligand>
        <name>NADP(+)</name>
        <dbReference type="ChEBI" id="CHEBI:58349"/>
    </ligand>
</feature>
<feature type="binding site" evidence="1">
    <location>
        <position position="53"/>
    </location>
    <ligand>
        <name>NADP(+)</name>
        <dbReference type="ChEBI" id="CHEBI:58349"/>
    </ligand>
</feature>
<feature type="binding site" evidence="1">
    <location>
        <begin position="83"/>
        <end position="86"/>
    </location>
    <ligand>
        <name>NADP(+)</name>
        <dbReference type="ChEBI" id="CHEBI:58349"/>
    </ligand>
</feature>
<feature type="binding site" evidence="1">
    <location>
        <position position="134"/>
    </location>
    <ligand>
        <name>NADP(+)</name>
        <dbReference type="ChEBI" id="CHEBI:58349"/>
    </ligand>
</feature>
<feature type="binding site" evidence="1">
    <location>
        <position position="191"/>
    </location>
    <ligand>
        <name>Mg(2+)</name>
        <dbReference type="ChEBI" id="CHEBI:18420"/>
        <label>1</label>
    </ligand>
</feature>
<feature type="binding site" evidence="1">
    <location>
        <position position="191"/>
    </location>
    <ligand>
        <name>Mg(2+)</name>
        <dbReference type="ChEBI" id="CHEBI:18420"/>
        <label>2</label>
    </ligand>
</feature>
<feature type="binding site" evidence="1">
    <location>
        <position position="195"/>
    </location>
    <ligand>
        <name>Mg(2+)</name>
        <dbReference type="ChEBI" id="CHEBI:18420"/>
        <label>1</label>
    </ligand>
</feature>
<feature type="binding site" evidence="1">
    <location>
        <position position="227"/>
    </location>
    <ligand>
        <name>Mg(2+)</name>
        <dbReference type="ChEBI" id="CHEBI:18420"/>
        <label>2</label>
    </ligand>
</feature>
<feature type="binding site" evidence="1">
    <location>
        <position position="231"/>
    </location>
    <ligand>
        <name>Mg(2+)</name>
        <dbReference type="ChEBI" id="CHEBI:18420"/>
        <label>2</label>
    </ligand>
</feature>
<feature type="binding site" evidence="1">
    <location>
        <position position="252"/>
    </location>
    <ligand>
        <name>substrate</name>
    </ligand>
</feature>
<accession>Q3MGX7</accession>
<dbReference type="EC" id="1.1.1.86" evidence="1"/>
<dbReference type="EMBL" id="CP000117">
    <property type="protein sequence ID" value="ABA19759.1"/>
    <property type="molecule type" value="Genomic_DNA"/>
</dbReference>
<dbReference type="SMR" id="Q3MGX7"/>
<dbReference type="STRING" id="240292.Ava_0133"/>
<dbReference type="KEGG" id="ava:Ava_0133"/>
<dbReference type="eggNOG" id="COG0059">
    <property type="taxonomic scope" value="Bacteria"/>
</dbReference>
<dbReference type="HOGENOM" id="CLU_033821_0_1_3"/>
<dbReference type="UniPathway" id="UPA00047">
    <property type="reaction ID" value="UER00056"/>
</dbReference>
<dbReference type="UniPathway" id="UPA00049">
    <property type="reaction ID" value="UER00060"/>
</dbReference>
<dbReference type="Proteomes" id="UP000002533">
    <property type="component" value="Chromosome"/>
</dbReference>
<dbReference type="GO" id="GO:0005829">
    <property type="term" value="C:cytosol"/>
    <property type="evidence" value="ECO:0007669"/>
    <property type="project" value="TreeGrafter"/>
</dbReference>
<dbReference type="GO" id="GO:0004455">
    <property type="term" value="F:ketol-acid reductoisomerase activity"/>
    <property type="evidence" value="ECO:0007669"/>
    <property type="project" value="UniProtKB-UniRule"/>
</dbReference>
<dbReference type="GO" id="GO:0000287">
    <property type="term" value="F:magnesium ion binding"/>
    <property type="evidence" value="ECO:0007669"/>
    <property type="project" value="UniProtKB-UniRule"/>
</dbReference>
<dbReference type="GO" id="GO:0050661">
    <property type="term" value="F:NADP binding"/>
    <property type="evidence" value="ECO:0007669"/>
    <property type="project" value="InterPro"/>
</dbReference>
<dbReference type="GO" id="GO:0009097">
    <property type="term" value="P:isoleucine biosynthetic process"/>
    <property type="evidence" value="ECO:0007669"/>
    <property type="project" value="UniProtKB-UniRule"/>
</dbReference>
<dbReference type="GO" id="GO:0009099">
    <property type="term" value="P:L-valine biosynthetic process"/>
    <property type="evidence" value="ECO:0007669"/>
    <property type="project" value="UniProtKB-UniRule"/>
</dbReference>
<dbReference type="FunFam" id="3.40.50.720:FF:000023">
    <property type="entry name" value="Ketol-acid reductoisomerase (NADP(+))"/>
    <property type="match status" value="1"/>
</dbReference>
<dbReference type="Gene3D" id="6.10.240.10">
    <property type="match status" value="1"/>
</dbReference>
<dbReference type="Gene3D" id="3.40.50.720">
    <property type="entry name" value="NAD(P)-binding Rossmann-like Domain"/>
    <property type="match status" value="1"/>
</dbReference>
<dbReference type="HAMAP" id="MF_00435">
    <property type="entry name" value="IlvC"/>
    <property type="match status" value="1"/>
</dbReference>
<dbReference type="InterPro" id="IPR008927">
    <property type="entry name" value="6-PGluconate_DH-like_C_sf"/>
</dbReference>
<dbReference type="InterPro" id="IPR013023">
    <property type="entry name" value="KARI"/>
</dbReference>
<dbReference type="InterPro" id="IPR000506">
    <property type="entry name" value="KARI_C"/>
</dbReference>
<dbReference type="InterPro" id="IPR013116">
    <property type="entry name" value="KARI_N"/>
</dbReference>
<dbReference type="InterPro" id="IPR014359">
    <property type="entry name" value="KARI_prok"/>
</dbReference>
<dbReference type="InterPro" id="IPR036291">
    <property type="entry name" value="NAD(P)-bd_dom_sf"/>
</dbReference>
<dbReference type="NCBIfam" id="TIGR00465">
    <property type="entry name" value="ilvC"/>
    <property type="match status" value="1"/>
</dbReference>
<dbReference type="NCBIfam" id="NF004017">
    <property type="entry name" value="PRK05479.1"/>
    <property type="match status" value="1"/>
</dbReference>
<dbReference type="NCBIfam" id="NF009940">
    <property type="entry name" value="PRK13403.1"/>
    <property type="match status" value="1"/>
</dbReference>
<dbReference type="PANTHER" id="PTHR21371">
    <property type="entry name" value="KETOL-ACID REDUCTOISOMERASE, MITOCHONDRIAL"/>
    <property type="match status" value="1"/>
</dbReference>
<dbReference type="PANTHER" id="PTHR21371:SF1">
    <property type="entry name" value="KETOL-ACID REDUCTOISOMERASE, MITOCHONDRIAL"/>
    <property type="match status" value="1"/>
</dbReference>
<dbReference type="Pfam" id="PF01450">
    <property type="entry name" value="KARI_C"/>
    <property type="match status" value="1"/>
</dbReference>
<dbReference type="Pfam" id="PF07991">
    <property type="entry name" value="KARI_N"/>
    <property type="match status" value="1"/>
</dbReference>
<dbReference type="PIRSF" id="PIRSF000116">
    <property type="entry name" value="IlvC_gammaproteo"/>
    <property type="match status" value="1"/>
</dbReference>
<dbReference type="SUPFAM" id="SSF48179">
    <property type="entry name" value="6-phosphogluconate dehydrogenase C-terminal domain-like"/>
    <property type="match status" value="1"/>
</dbReference>
<dbReference type="SUPFAM" id="SSF51735">
    <property type="entry name" value="NAD(P)-binding Rossmann-fold domains"/>
    <property type="match status" value="1"/>
</dbReference>
<dbReference type="PROSITE" id="PS51851">
    <property type="entry name" value="KARI_C"/>
    <property type="match status" value="1"/>
</dbReference>
<dbReference type="PROSITE" id="PS51850">
    <property type="entry name" value="KARI_N"/>
    <property type="match status" value="1"/>
</dbReference>
<keyword id="KW-0028">Amino-acid biosynthesis</keyword>
<keyword id="KW-0100">Branched-chain amino acid biosynthesis</keyword>
<keyword id="KW-0460">Magnesium</keyword>
<keyword id="KW-0479">Metal-binding</keyword>
<keyword id="KW-0521">NADP</keyword>
<keyword id="KW-0560">Oxidoreductase</keyword>
<gene>
    <name evidence="1" type="primary">ilvC</name>
    <name type="ordered locus">Ava_0133</name>
</gene>
<reference key="1">
    <citation type="journal article" date="2014" name="Stand. Genomic Sci.">
        <title>Complete genome sequence of Anabaena variabilis ATCC 29413.</title>
        <authorList>
            <person name="Thiel T."/>
            <person name="Pratte B.S."/>
            <person name="Zhong J."/>
            <person name="Goodwin L."/>
            <person name="Copeland A."/>
            <person name="Lucas S."/>
            <person name="Han C."/>
            <person name="Pitluck S."/>
            <person name="Land M.L."/>
            <person name="Kyrpides N.C."/>
            <person name="Woyke T."/>
        </authorList>
    </citation>
    <scope>NUCLEOTIDE SEQUENCE [LARGE SCALE GENOMIC DNA]</scope>
    <source>
        <strain>ATCC 29413 / PCC 7937</strain>
    </source>
</reference>